<evidence type="ECO:0000255" key="1">
    <source>
        <dbReference type="HAMAP-Rule" id="MF_01200"/>
    </source>
</evidence>
<dbReference type="EC" id="4.1.1.23" evidence="1"/>
<dbReference type="EMBL" id="CP001191">
    <property type="protein sequence ID" value="ACI57583.1"/>
    <property type="molecule type" value="Genomic_DNA"/>
</dbReference>
<dbReference type="RefSeq" id="WP_012559687.1">
    <property type="nucleotide sequence ID" value="NC_011369.1"/>
</dbReference>
<dbReference type="SMR" id="B5ZYG6"/>
<dbReference type="STRING" id="395492.Rleg2_4325"/>
<dbReference type="KEGG" id="rlt:Rleg2_4325"/>
<dbReference type="eggNOG" id="COG0284">
    <property type="taxonomic scope" value="Bacteria"/>
</dbReference>
<dbReference type="HOGENOM" id="CLU_067069_1_0_5"/>
<dbReference type="UniPathway" id="UPA00070">
    <property type="reaction ID" value="UER00120"/>
</dbReference>
<dbReference type="Proteomes" id="UP000008330">
    <property type="component" value="Chromosome"/>
</dbReference>
<dbReference type="GO" id="GO:0005829">
    <property type="term" value="C:cytosol"/>
    <property type="evidence" value="ECO:0007669"/>
    <property type="project" value="TreeGrafter"/>
</dbReference>
<dbReference type="GO" id="GO:0004590">
    <property type="term" value="F:orotidine-5'-phosphate decarboxylase activity"/>
    <property type="evidence" value="ECO:0007669"/>
    <property type="project" value="UniProtKB-UniRule"/>
</dbReference>
<dbReference type="GO" id="GO:0006207">
    <property type="term" value="P:'de novo' pyrimidine nucleobase biosynthetic process"/>
    <property type="evidence" value="ECO:0007669"/>
    <property type="project" value="InterPro"/>
</dbReference>
<dbReference type="GO" id="GO:0044205">
    <property type="term" value="P:'de novo' UMP biosynthetic process"/>
    <property type="evidence" value="ECO:0007669"/>
    <property type="project" value="UniProtKB-UniRule"/>
</dbReference>
<dbReference type="CDD" id="cd04725">
    <property type="entry name" value="OMP_decarboxylase_like"/>
    <property type="match status" value="1"/>
</dbReference>
<dbReference type="Gene3D" id="3.20.20.70">
    <property type="entry name" value="Aldolase class I"/>
    <property type="match status" value="1"/>
</dbReference>
<dbReference type="HAMAP" id="MF_01200_B">
    <property type="entry name" value="OMPdecase_type1_B"/>
    <property type="match status" value="1"/>
</dbReference>
<dbReference type="InterPro" id="IPR013785">
    <property type="entry name" value="Aldolase_TIM"/>
</dbReference>
<dbReference type="InterPro" id="IPR014732">
    <property type="entry name" value="OMPdecase"/>
</dbReference>
<dbReference type="InterPro" id="IPR018089">
    <property type="entry name" value="OMPdecase_AS"/>
</dbReference>
<dbReference type="InterPro" id="IPR047596">
    <property type="entry name" value="OMPdecase_bac"/>
</dbReference>
<dbReference type="InterPro" id="IPR001754">
    <property type="entry name" value="OMPdeCOase_dom"/>
</dbReference>
<dbReference type="InterPro" id="IPR011060">
    <property type="entry name" value="RibuloseP-bd_barrel"/>
</dbReference>
<dbReference type="NCBIfam" id="NF001273">
    <property type="entry name" value="PRK00230.1"/>
    <property type="match status" value="1"/>
</dbReference>
<dbReference type="NCBIfam" id="TIGR01740">
    <property type="entry name" value="pyrF"/>
    <property type="match status" value="1"/>
</dbReference>
<dbReference type="PANTHER" id="PTHR32119">
    <property type="entry name" value="OROTIDINE 5'-PHOSPHATE DECARBOXYLASE"/>
    <property type="match status" value="1"/>
</dbReference>
<dbReference type="PANTHER" id="PTHR32119:SF2">
    <property type="entry name" value="OROTIDINE 5'-PHOSPHATE DECARBOXYLASE"/>
    <property type="match status" value="1"/>
</dbReference>
<dbReference type="Pfam" id="PF00215">
    <property type="entry name" value="OMPdecase"/>
    <property type="match status" value="1"/>
</dbReference>
<dbReference type="SMART" id="SM00934">
    <property type="entry name" value="OMPdecase"/>
    <property type="match status" value="1"/>
</dbReference>
<dbReference type="SUPFAM" id="SSF51366">
    <property type="entry name" value="Ribulose-phoshate binding barrel"/>
    <property type="match status" value="1"/>
</dbReference>
<dbReference type="PROSITE" id="PS00156">
    <property type="entry name" value="OMPDECASE"/>
    <property type="match status" value="1"/>
</dbReference>
<name>PYRF_RHILW</name>
<gene>
    <name evidence="1" type="primary">pyrF</name>
    <name type="ordered locus">Rleg2_4325</name>
</gene>
<protein>
    <recommendedName>
        <fullName evidence="1">Orotidine 5'-phosphate decarboxylase</fullName>
        <ecNumber evidence="1">4.1.1.23</ecNumber>
    </recommendedName>
    <alternativeName>
        <fullName evidence="1">OMP decarboxylase</fullName>
        <shortName evidence="1">OMPDCase</shortName>
        <shortName evidence="1">OMPdecase</shortName>
    </alternativeName>
</protein>
<feature type="chain" id="PRO_1000138551" description="Orotidine 5'-phosphate decarboxylase">
    <location>
        <begin position="1"/>
        <end position="235"/>
    </location>
</feature>
<feature type="active site" description="Proton donor" evidence="1">
    <location>
        <position position="63"/>
    </location>
</feature>
<feature type="binding site" evidence="1">
    <location>
        <position position="12"/>
    </location>
    <ligand>
        <name>substrate</name>
    </ligand>
</feature>
<feature type="binding site" evidence="1">
    <location>
        <position position="34"/>
    </location>
    <ligand>
        <name>substrate</name>
    </ligand>
</feature>
<feature type="binding site" evidence="1">
    <location>
        <begin position="61"/>
        <end position="70"/>
    </location>
    <ligand>
        <name>substrate</name>
    </ligand>
</feature>
<feature type="binding site" evidence="1">
    <location>
        <position position="116"/>
    </location>
    <ligand>
        <name>substrate</name>
    </ligand>
</feature>
<feature type="binding site" evidence="1">
    <location>
        <position position="177"/>
    </location>
    <ligand>
        <name>substrate</name>
    </ligand>
</feature>
<feature type="binding site" evidence="1">
    <location>
        <position position="186"/>
    </location>
    <ligand>
        <name>substrate</name>
    </ligand>
</feature>
<feature type="binding site" evidence="1">
    <location>
        <position position="207"/>
    </location>
    <ligand>
        <name>substrate</name>
    </ligand>
</feature>
<comment type="function">
    <text evidence="1">Catalyzes the decarboxylation of orotidine 5'-monophosphate (OMP) to uridine 5'-monophosphate (UMP).</text>
</comment>
<comment type="catalytic activity">
    <reaction evidence="1">
        <text>orotidine 5'-phosphate + H(+) = UMP + CO2</text>
        <dbReference type="Rhea" id="RHEA:11596"/>
        <dbReference type="ChEBI" id="CHEBI:15378"/>
        <dbReference type="ChEBI" id="CHEBI:16526"/>
        <dbReference type="ChEBI" id="CHEBI:57538"/>
        <dbReference type="ChEBI" id="CHEBI:57865"/>
        <dbReference type="EC" id="4.1.1.23"/>
    </reaction>
</comment>
<comment type="pathway">
    <text evidence="1">Pyrimidine metabolism; UMP biosynthesis via de novo pathway; UMP from orotate: step 2/2.</text>
</comment>
<comment type="subunit">
    <text evidence="1">Homodimer.</text>
</comment>
<comment type="similarity">
    <text evidence="1">Belongs to the OMP decarboxylase family. Type 1 subfamily.</text>
</comment>
<keyword id="KW-0210">Decarboxylase</keyword>
<keyword id="KW-0456">Lyase</keyword>
<keyword id="KW-0665">Pyrimidine biosynthesis</keyword>
<keyword id="KW-1185">Reference proteome</keyword>
<accession>B5ZYG6</accession>
<sequence>MDARERLIVGLDVPTIGEAEKLVSTLGDDILFYKIGYQLVFAGGLEFARDLAASGKKIFLDMKLLDIDNTVASGVENIAKMGMSMLTLHAYPKAMKAAVEAAAGSGLCLLGVTVLTSMDAEDLADAGYSQDPHSLVLRRAGQARAAGMGGIVCSAAEAAEVREIVGPDMAIVTPGIRPTGSDHGDQKRVMTPFDALKAGATHLVVARPIVKAPDPRDAARAVLNEMVGALWPANR</sequence>
<proteinExistence type="inferred from homology"/>
<reference key="1">
    <citation type="journal article" date="2010" name="Stand. Genomic Sci.">
        <title>Complete genome sequence of Rhizobium leguminosarum bv trifolii strain WSM2304, an effective microsymbiont of the South American clover Trifolium polymorphum.</title>
        <authorList>
            <person name="Reeve W."/>
            <person name="O'Hara G."/>
            <person name="Chain P."/>
            <person name="Ardley J."/>
            <person name="Brau L."/>
            <person name="Nandesena K."/>
            <person name="Tiwari R."/>
            <person name="Malfatti S."/>
            <person name="Kiss H."/>
            <person name="Lapidus A."/>
            <person name="Copeland A."/>
            <person name="Nolan M."/>
            <person name="Land M."/>
            <person name="Ivanova N."/>
            <person name="Mavromatis K."/>
            <person name="Markowitz V."/>
            <person name="Kyrpides N."/>
            <person name="Melino V."/>
            <person name="Denton M."/>
            <person name="Yates R."/>
            <person name="Howieson J."/>
        </authorList>
    </citation>
    <scope>NUCLEOTIDE SEQUENCE [LARGE SCALE GENOMIC DNA]</scope>
    <source>
        <strain>WSM2304</strain>
    </source>
</reference>
<organism>
    <name type="scientific">Rhizobium leguminosarum bv. trifolii (strain WSM2304)</name>
    <dbReference type="NCBI Taxonomy" id="395492"/>
    <lineage>
        <taxon>Bacteria</taxon>
        <taxon>Pseudomonadati</taxon>
        <taxon>Pseudomonadota</taxon>
        <taxon>Alphaproteobacteria</taxon>
        <taxon>Hyphomicrobiales</taxon>
        <taxon>Rhizobiaceae</taxon>
        <taxon>Rhizobium/Agrobacterium group</taxon>
        <taxon>Rhizobium</taxon>
    </lineage>
</organism>